<evidence type="ECO:0000255" key="1">
    <source>
        <dbReference type="HAMAP-Rule" id="MF_00054"/>
    </source>
</evidence>
<proteinExistence type="inferred from homology"/>
<organism>
    <name type="scientific">Chloroflexus aggregans (strain MD-66 / DSM 9485)</name>
    <dbReference type="NCBI Taxonomy" id="326427"/>
    <lineage>
        <taxon>Bacteria</taxon>
        <taxon>Bacillati</taxon>
        <taxon>Chloroflexota</taxon>
        <taxon>Chloroflexia</taxon>
        <taxon>Chloroflexales</taxon>
        <taxon>Chloroflexineae</taxon>
        <taxon>Chloroflexaceae</taxon>
        <taxon>Chloroflexus</taxon>
    </lineage>
</organism>
<name>EFG_CHLAD</name>
<accession>B8G6S9</accession>
<reference key="1">
    <citation type="submission" date="2008-12" db="EMBL/GenBank/DDBJ databases">
        <title>Complete sequence of Chloroflexus aggregans DSM 9485.</title>
        <authorList>
            <consortium name="US DOE Joint Genome Institute"/>
            <person name="Lucas S."/>
            <person name="Copeland A."/>
            <person name="Lapidus A."/>
            <person name="Glavina del Rio T."/>
            <person name="Dalin E."/>
            <person name="Tice H."/>
            <person name="Pitluck S."/>
            <person name="Foster B."/>
            <person name="Larimer F."/>
            <person name="Land M."/>
            <person name="Hauser L."/>
            <person name="Kyrpides N."/>
            <person name="Mikhailova N."/>
            <person name="Bryant D.A."/>
            <person name="Richardson P."/>
        </authorList>
    </citation>
    <scope>NUCLEOTIDE SEQUENCE [LARGE SCALE GENOMIC DNA]</scope>
    <source>
        <strain>MD-66 / DSM 9485</strain>
    </source>
</reference>
<keyword id="KW-0963">Cytoplasm</keyword>
<keyword id="KW-0251">Elongation factor</keyword>
<keyword id="KW-0342">GTP-binding</keyword>
<keyword id="KW-0547">Nucleotide-binding</keyword>
<keyword id="KW-0648">Protein biosynthesis</keyword>
<protein>
    <recommendedName>
        <fullName evidence="1">Elongation factor G</fullName>
        <shortName evidence="1">EF-G</shortName>
    </recommendedName>
</protein>
<sequence>MPRQIELDKVRNIGIIAHIDAGKTTTTERILFYTGRTYKIGEVHEGTATMDWMPQEQERGITITAAATTAPWRLNGVEYRINIIDTPGHVDFTVEVERSLRVLDGGIVVFDGVAGVEPQSETVWRQADKYNVPRICFVNKMDRVGASFERCVQMIKDRLGAKPAVVQLPIGVEDTFRGTIDLFTMKATIYYDDLGKDIREEEIPAELRPAAEKARNELIEMIAETDDELTLLYLEGQELTVEELKRGLRKATIERKLVPVLCGAALRNKGVQKLLDAVVEYLPSPLDRPAITGTLPGQVMGDEGVEVITRRVSDDEPFTALVFKIVADPYVGKLAYFRVYAGKITKGSYVLNSTRGQRERLGRLLRMHANHREDIDEVYAGEIAAMVGPKNSYTGDTICDPDHPIVLESIRFPEPVIEMAIEPKTKADQDKMSIALSRLAEEDPTFRVYTDQETGQTIIKGMGELHLEVIVDRMRREYKVEANQGKPQVSYRETITVPVDQESRFVRQTGGKGQYGHVKIKFEPLPPGKGFEFVNAIVGGVIPKEYIPAVEQGLREAMQTGVIAGYPVVDLKATLYDGSYHEVDSSEMAFKIAASMCLKEAVRRGKPQLLEPIMKVETVTPEEFLGTVIGDFNSRRGRIEGIEARGNAQVVRAFVPLANMFGYMTDLRSATQGRATASMEFDHYEPLPEALAKEIIEKRSAN</sequence>
<comment type="function">
    <text evidence="1">Catalyzes the GTP-dependent ribosomal translocation step during translation elongation. During this step, the ribosome changes from the pre-translocational (PRE) to the post-translocational (POST) state as the newly formed A-site-bound peptidyl-tRNA and P-site-bound deacylated tRNA move to the P and E sites, respectively. Catalyzes the coordinated movement of the two tRNA molecules, the mRNA and conformational changes in the ribosome.</text>
</comment>
<comment type="subcellular location">
    <subcellularLocation>
        <location evidence="1">Cytoplasm</location>
    </subcellularLocation>
</comment>
<comment type="similarity">
    <text evidence="1">Belongs to the TRAFAC class translation factor GTPase superfamily. Classic translation factor GTPase family. EF-G/EF-2 subfamily.</text>
</comment>
<dbReference type="EMBL" id="CP001337">
    <property type="protein sequence ID" value="ACL25888.1"/>
    <property type="molecule type" value="Genomic_DNA"/>
</dbReference>
<dbReference type="RefSeq" id="WP_015941740.1">
    <property type="nucleotide sequence ID" value="NC_011831.1"/>
</dbReference>
<dbReference type="SMR" id="B8G6S9"/>
<dbReference type="STRING" id="326427.Cagg_3028"/>
<dbReference type="KEGG" id="cag:Cagg_3028"/>
<dbReference type="eggNOG" id="COG0480">
    <property type="taxonomic scope" value="Bacteria"/>
</dbReference>
<dbReference type="HOGENOM" id="CLU_002794_4_1_0"/>
<dbReference type="OrthoDB" id="9804431at2"/>
<dbReference type="Proteomes" id="UP000002508">
    <property type="component" value="Chromosome"/>
</dbReference>
<dbReference type="GO" id="GO:0005737">
    <property type="term" value="C:cytoplasm"/>
    <property type="evidence" value="ECO:0007669"/>
    <property type="project" value="UniProtKB-SubCell"/>
</dbReference>
<dbReference type="GO" id="GO:0005525">
    <property type="term" value="F:GTP binding"/>
    <property type="evidence" value="ECO:0007669"/>
    <property type="project" value="UniProtKB-UniRule"/>
</dbReference>
<dbReference type="GO" id="GO:0003924">
    <property type="term" value="F:GTPase activity"/>
    <property type="evidence" value="ECO:0007669"/>
    <property type="project" value="InterPro"/>
</dbReference>
<dbReference type="GO" id="GO:0003746">
    <property type="term" value="F:translation elongation factor activity"/>
    <property type="evidence" value="ECO:0007669"/>
    <property type="project" value="UniProtKB-UniRule"/>
</dbReference>
<dbReference type="GO" id="GO:0032790">
    <property type="term" value="P:ribosome disassembly"/>
    <property type="evidence" value="ECO:0007669"/>
    <property type="project" value="TreeGrafter"/>
</dbReference>
<dbReference type="CDD" id="cd01886">
    <property type="entry name" value="EF-G"/>
    <property type="match status" value="1"/>
</dbReference>
<dbReference type="CDD" id="cd16262">
    <property type="entry name" value="EFG_III"/>
    <property type="match status" value="1"/>
</dbReference>
<dbReference type="CDD" id="cd01434">
    <property type="entry name" value="EFG_mtEFG1_IV"/>
    <property type="match status" value="1"/>
</dbReference>
<dbReference type="CDD" id="cd03713">
    <property type="entry name" value="EFG_mtEFG_C"/>
    <property type="match status" value="1"/>
</dbReference>
<dbReference type="CDD" id="cd04088">
    <property type="entry name" value="EFG_mtEFG_II"/>
    <property type="match status" value="1"/>
</dbReference>
<dbReference type="FunFam" id="2.40.30.10:FF:000006">
    <property type="entry name" value="Elongation factor G"/>
    <property type="match status" value="1"/>
</dbReference>
<dbReference type="FunFam" id="3.30.230.10:FF:000003">
    <property type="entry name" value="Elongation factor G"/>
    <property type="match status" value="1"/>
</dbReference>
<dbReference type="FunFam" id="3.30.70.240:FF:000001">
    <property type="entry name" value="Elongation factor G"/>
    <property type="match status" value="1"/>
</dbReference>
<dbReference type="FunFam" id="3.30.70.870:FF:000001">
    <property type="entry name" value="Elongation factor G"/>
    <property type="match status" value="1"/>
</dbReference>
<dbReference type="FunFam" id="3.40.50.300:FF:000029">
    <property type="entry name" value="Elongation factor G"/>
    <property type="match status" value="1"/>
</dbReference>
<dbReference type="Gene3D" id="3.30.230.10">
    <property type="match status" value="1"/>
</dbReference>
<dbReference type="Gene3D" id="3.30.70.240">
    <property type="match status" value="1"/>
</dbReference>
<dbReference type="Gene3D" id="3.30.70.870">
    <property type="entry name" value="Elongation Factor G (Translational Gtpase), domain 3"/>
    <property type="match status" value="1"/>
</dbReference>
<dbReference type="Gene3D" id="3.40.50.300">
    <property type="entry name" value="P-loop containing nucleotide triphosphate hydrolases"/>
    <property type="match status" value="1"/>
</dbReference>
<dbReference type="Gene3D" id="2.40.30.10">
    <property type="entry name" value="Translation factors"/>
    <property type="match status" value="1"/>
</dbReference>
<dbReference type="HAMAP" id="MF_00054_B">
    <property type="entry name" value="EF_G_EF_2_B"/>
    <property type="match status" value="1"/>
</dbReference>
<dbReference type="InterPro" id="IPR053905">
    <property type="entry name" value="EF-G-like_DII"/>
</dbReference>
<dbReference type="InterPro" id="IPR041095">
    <property type="entry name" value="EFG_II"/>
</dbReference>
<dbReference type="InterPro" id="IPR009022">
    <property type="entry name" value="EFG_III"/>
</dbReference>
<dbReference type="InterPro" id="IPR035647">
    <property type="entry name" value="EFG_III/V"/>
</dbReference>
<dbReference type="InterPro" id="IPR047872">
    <property type="entry name" value="EFG_IV"/>
</dbReference>
<dbReference type="InterPro" id="IPR035649">
    <property type="entry name" value="EFG_V"/>
</dbReference>
<dbReference type="InterPro" id="IPR000640">
    <property type="entry name" value="EFG_V-like"/>
</dbReference>
<dbReference type="InterPro" id="IPR031157">
    <property type="entry name" value="G_TR_CS"/>
</dbReference>
<dbReference type="InterPro" id="IPR027417">
    <property type="entry name" value="P-loop_NTPase"/>
</dbReference>
<dbReference type="InterPro" id="IPR020568">
    <property type="entry name" value="Ribosomal_Su5_D2-typ_SF"/>
</dbReference>
<dbReference type="InterPro" id="IPR014721">
    <property type="entry name" value="Ribsml_uS5_D2-typ_fold_subgr"/>
</dbReference>
<dbReference type="InterPro" id="IPR005225">
    <property type="entry name" value="Small_GTP-bd"/>
</dbReference>
<dbReference type="InterPro" id="IPR000795">
    <property type="entry name" value="T_Tr_GTP-bd_dom"/>
</dbReference>
<dbReference type="InterPro" id="IPR009000">
    <property type="entry name" value="Transl_B-barrel_sf"/>
</dbReference>
<dbReference type="InterPro" id="IPR004540">
    <property type="entry name" value="Transl_elong_EFG/EF2"/>
</dbReference>
<dbReference type="InterPro" id="IPR005517">
    <property type="entry name" value="Transl_elong_EFG/EF2_IV"/>
</dbReference>
<dbReference type="NCBIfam" id="TIGR00484">
    <property type="entry name" value="EF-G"/>
    <property type="match status" value="1"/>
</dbReference>
<dbReference type="NCBIfam" id="NF009379">
    <property type="entry name" value="PRK12740.1-3"/>
    <property type="match status" value="1"/>
</dbReference>
<dbReference type="NCBIfam" id="NF009381">
    <property type="entry name" value="PRK12740.1-5"/>
    <property type="match status" value="1"/>
</dbReference>
<dbReference type="NCBIfam" id="TIGR00231">
    <property type="entry name" value="small_GTP"/>
    <property type="match status" value="1"/>
</dbReference>
<dbReference type="PANTHER" id="PTHR43261:SF1">
    <property type="entry name" value="RIBOSOME-RELEASING FACTOR 2, MITOCHONDRIAL"/>
    <property type="match status" value="1"/>
</dbReference>
<dbReference type="PANTHER" id="PTHR43261">
    <property type="entry name" value="TRANSLATION ELONGATION FACTOR G-RELATED"/>
    <property type="match status" value="1"/>
</dbReference>
<dbReference type="Pfam" id="PF22042">
    <property type="entry name" value="EF-G_D2"/>
    <property type="match status" value="1"/>
</dbReference>
<dbReference type="Pfam" id="PF00679">
    <property type="entry name" value="EFG_C"/>
    <property type="match status" value="1"/>
</dbReference>
<dbReference type="Pfam" id="PF14492">
    <property type="entry name" value="EFG_III"/>
    <property type="match status" value="1"/>
</dbReference>
<dbReference type="Pfam" id="PF03764">
    <property type="entry name" value="EFG_IV"/>
    <property type="match status" value="1"/>
</dbReference>
<dbReference type="Pfam" id="PF00009">
    <property type="entry name" value="GTP_EFTU"/>
    <property type="match status" value="1"/>
</dbReference>
<dbReference type="PRINTS" id="PR00315">
    <property type="entry name" value="ELONGATNFCT"/>
</dbReference>
<dbReference type="SMART" id="SM00838">
    <property type="entry name" value="EFG_C"/>
    <property type="match status" value="1"/>
</dbReference>
<dbReference type="SMART" id="SM00889">
    <property type="entry name" value="EFG_IV"/>
    <property type="match status" value="1"/>
</dbReference>
<dbReference type="SUPFAM" id="SSF54980">
    <property type="entry name" value="EF-G C-terminal domain-like"/>
    <property type="match status" value="2"/>
</dbReference>
<dbReference type="SUPFAM" id="SSF52540">
    <property type="entry name" value="P-loop containing nucleoside triphosphate hydrolases"/>
    <property type="match status" value="1"/>
</dbReference>
<dbReference type="SUPFAM" id="SSF54211">
    <property type="entry name" value="Ribosomal protein S5 domain 2-like"/>
    <property type="match status" value="1"/>
</dbReference>
<dbReference type="SUPFAM" id="SSF50447">
    <property type="entry name" value="Translation proteins"/>
    <property type="match status" value="1"/>
</dbReference>
<dbReference type="PROSITE" id="PS00301">
    <property type="entry name" value="G_TR_1"/>
    <property type="match status" value="1"/>
</dbReference>
<dbReference type="PROSITE" id="PS51722">
    <property type="entry name" value="G_TR_2"/>
    <property type="match status" value="1"/>
</dbReference>
<feature type="chain" id="PRO_1000201447" description="Elongation factor G">
    <location>
        <begin position="1"/>
        <end position="702"/>
    </location>
</feature>
<feature type="domain" description="tr-type G">
    <location>
        <begin position="8"/>
        <end position="286"/>
    </location>
</feature>
<feature type="binding site" evidence="1">
    <location>
        <begin position="17"/>
        <end position="24"/>
    </location>
    <ligand>
        <name>GTP</name>
        <dbReference type="ChEBI" id="CHEBI:37565"/>
    </ligand>
</feature>
<feature type="binding site" evidence="1">
    <location>
        <begin position="85"/>
        <end position="89"/>
    </location>
    <ligand>
        <name>GTP</name>
        <dbReference type="ChEBI" id="CHEBI:37565"/>
    </ligand>
</feature>
<feature type="binding site" evidence="1">
    <location>
        <begin position="139"/>
        <end position="142"/>
    </location>
    <ligand>
        <name>GTP</name>
        <dbReference type="ChEBI" id="CHEBI:37565"/>
    </ligand>
</feature>
<gene>
    <name evidence="1" type="primary">fusA</name>
    <name type="ordered locus">Cagg_3028</name>
</gene>